<comment type="function">
    <text evidence="1">Might have a role in the suppression of host immune response.</text>
</comment>
<comment type="induction">
    <text evidence="1">Expressed in the early phase of the viral replicative cycle.</text>
</comment>
<comment type="similarity">
    <text evidence="4">Belongs to the orthopoxvirus OPG047 family.</text>
</comment>
<evidence type="ECO:0000250" key="1">
    <source>
        <dbReference type="UniProtKB" id="P24357"/>
    </source>
</evidence>
<evidence type="ECO:0000255" key="2"/>
<evidence type="ECO:0000255" key="3">
    <source>
        <dbReference type="PROSITE-ProRule" id="PRU00037"/>
    </source>
</evidence>
<evidence type="ECO:0000305" key="4"/>
<gene>
    <name type="primary">OPG047</name>
    <name type="ordered locus">MVA031L</name>
    <name type="ordered locus">ACAM3000_MVA_031</name>
</gene>
<proteinExistence type="inferred from homology"/>
<reference key="1">
    <citation type="journal article" date="1998" name="Virology">
        <title>The complete genomic sequence of the modified vaccinia Ankara strain: comparison with other orthopoxviruses.</title>
        <authorList>
            <person name="Antoine G."/>
            <person name="Scheiflinger F."/>
            <person name="Dorner F."/>
            <person name="Falkner F.G."/>
        </authorList>
    </citation>
    <scope>NUCLEOTIDE SEQUENCE [LARGE SCALE GENOMIC DNA]</scope>
</reference>
<reference key="2">
    <citation type="submission" date="2004-04" db="EMBL/GenBank/DDBJ databases">
        <authorList>
            <person name="Esposito J.J."/>
            <person name="Frace M."/>
            <person name="Sammons S.A."/>
            <person name="Olsen-Rasmussen M.S."/>
            <person name="Osborne J."/>
            <person name="Khristova M."/>
            <person name="Wohlhueter R.M."/>
        </authorList>
    </citation>
    <scope>NUCLEOTIDE SEQUENCE [LARGE SCALE GENOMIC DNA]</scope>
    <source>
        <strain>Isolate Acambis 3000</strain>
    </source>
</reference>
<accession>O57174</accession>
<organism>
    <name type="scientific">Vaccinia virus (strain Ankara)</name>
    <name type="common">VACV</name>
    <dbReference type="NCBI Taxonomy" id="126794"/>
    <lineage>
        <taxon>Viruses</taxon>
        <taxon>Varidnaviria</taxon>
        <taxon>Bamfordvirae</taxon>
        <taxon>Nucleocytoviricota</taxon>
        <taxon>Pokkesviricetes</taxon>
        <taxon>Chitovirales</taxon>
        <taxon>Poxviridae</taxon>
        <taxon>Chordopoxvirinae</taxon>
        <taxon>Orthopoxvirus</taxon>
        <taxon>Vaccinia virus</taxon>
    </lineage>
</organism>
<sequence length="476" mass="55299">MPIFVNTVYCKNILALSMTKKFKTIIDAIGGNIIVNSTILKKLSPYFRTHLRQKYTKNKDPVTRVCLDLDIHSLTSIVIYSYTGKVYIDSHNVVNLLRASILTSVEFIIYTCINFILRDFRKEYCVECYMMGIEYGLSNLLCHTKNFIAKHFLELEDDIIDNFDYLSMKLILESDELNVPDEDFVIKWYIKRRNKLGNLLLLIKNVIRSNYLSPRGINNVKWILDCTKIFHCDKQPRKSYKYPFIEYPMNMDQIIDIFHMCTSTHVGEVVYLIGGWMNNEIHNNAIAVNYISNNWIPIPPMNSPRLYASGIPANNKLYVVGGLPNPTSVERWFHGDAAWVNMPSLLKPRCNPAVASINNVIYVMGGHSETDTTTEYLLPNHDQWQFGPSTYYPHYKSCALVFGRRLFLVGRNAEFYCESSNTWTLIDDPIYPRDNPELIIVDNKLLLIGGFYRESYIDTIEVYNHHTYSWNIWDGK</sequence>
<dbReference type="EMBL" id="U94848">
    <property type="protein sequence ID" value="AAB96414.1"/>
    <property type="molecule type" value="Genomic_DNA"/>
</dbReference>
<dbReference type="EMBL" id="AY603355">
    <property type="protein sequence ID" value="AAT10429.1"/>
    <property type="molecule type" value="Genomic_DNA"/>
</dbReference>
<dbReference type="PIR" id="T30781">
    <property type="entry name" value="T30781"/>
</dbReference>
<dbReference type="SMR" id="O57174"/>
<dbReference type="Proteomes" id="UP000159908">
    <property type="component" value="Segment"/>
</dbReference>
<dbReference type="Proteomes" id="UP000172909">
    <property type="component" value="Segment"/>
</dbReference>
<dbReference type="Gene3D" id="2.120.10.80">
    <property type="entry name" value="Kelch-type beta propeller"/>
    <property type="match status" value="1"/>
</dbReference>
<dbReference type="Gene3D" id="3.30.710.10">
    <property type="entry name" value="Potassium Channel Kv1.1, Chain A"/>
    <property type="match status" value="1"/>
</dbReference>
<dbReference type="InterPro" id="IPR011705">
    <property type="entry name" value="BACK"/>
</dbReference>
<dbReference type="InterPro" id="IPR000210">
    <property type="entry name" value="BTB/POZ_dom"/>
</dbReference>
<dbReference type="InterPro" id="IPR015915">
    <property type="entry name" value="Kelch-typ_b-propeller"/>
</dbReference>
<dbReference type="InterPro" id="IPR006652">
    <property type="entry name" value="Kelch_1"/>
</dbReference>
<dbReference type="InterPro" id="IPR011333">
    <property type="entry name" value="SKP1/BTB/POZ_sf"/>
</dbReference>
<dbReference type="PANTHER" id="PTHR24412">
    <property type="entry name" value="KELCH PROTEIN"/>
    <property type="match status" value="1"/>
</dbReference>
<dbReference type="PANTHER" id="PTHR24412:SF489">
    <property type="entry name" value="RING FINGER DOMAIN AND KELCH REPEAT-CONTAINING PROTEIN DDB_G0271372"/>
    <property type="match status" value="1"/>
</dbReference>
<dbReference type="Pfam" id="PF07707">
    <property type="entry name" value="BACK"/>
    <property type="match status" value="1"/>
</dbReference>
<dbReference type="Pfam" id="PF00651">
    <property type="entry name" value="BTB"/>
    <property type="match status" value="1"/>
</dbReference>
<dbReference type="Pfam" id="PF01344">
    <property type="entry name" value="Kelch_1"/>
    <property type="match status" value="3"/>
</dbReference>
<dbReference type="PRINTS" id="PR00501">
    <property type="entry name" value="KELCHREPEAT"/>
</dbReference>
<dbReference type="SMART" id="SM00612">
    <property type="entry name" value="Kelch"/>
    <property type="match status" value="3"/>
</dbReference>
<dbReference type="SUPFAM" id="SSF117281">
    <property type="entry name" value="Kelch motif"/>
    <property type="match status" value="1"/>
</dbReference>
<dbReference type="SUPFAM" id="SSF54695">
    <property type="entry name" value="POZ domain"/>
    <property type="match status" value="1"/>
</dbReference>
<dbReference type="PROSITE" id="PS50097">
    <property type="entry name" value="BTB"/>
    <property type="match status" value="1"/>
</dbReference>
<feature type="chain" id="PRO_0000119165" description="Immune evasion protein OPG047">
    <location>
        <begin position="1"/>
        <end position="476"/>
    </location>
</feature>
<feature type="domain" description="BTB" evidence="3">
    <location>
        <begin position="10"/>
        <end position="90"/>
    </location>
</feature>
<feature type="domain" description="BACK" evidence="2">
    <location>
        <begin position="125"/>
        <end position="218"/>
    </location>
</feature>
<feature type="repeat" description="Kelch 1" evidence="2">
    <location>
        <begin position="269"/>
        <end position="315"/>
    </location>
</feature>
<feature type="repeat" description="Kelch 2" evidence="2">
    <location>
        <begin position="316"/>
        <end position="359"/>
    </location>
</feature>
<feature type="repeat" description="Kelch 3" evidence="2">
    <location>
        <begin position="361"/>
        <end position="404"/>
    </location>
</feature>
<feature type="repeat" description="Kelch 4" evidence="2">
    <location>
        <begin position="406"/>
        <end position="443"/>
    </location>
</feature>
<feature type="repeat" description="Kelch 5" evidence="2">
    <location>
        <begin position="444"/>
        <end position="476"/>
    </location>
</feature>
<keyword id="KW-0880">Kelch repeat</keyword>
<keyword id="KW-0677">Repeat</keyword>
<name>PG047_VACCA</name>
<protein>
    <recommendedName>
        <fullName>Immune evasion protein OPG047</fullName>
    </recommendedName>
    <alternativeName>
        <fullName>Kelch repeat protein</fullName>
    </alternativeName>
</protein>
<organismHost>
    <name type="scientific">Homo sapiens</name>
    <name type="common">Human</name>
    <dbReference type="NCBI Taxonomy" id="9606"/>
</organismHost>